<sequence>MKVMEKKKRDWNSLSIITIITIILLTPCLTSELWVTVYYGVPVWHDADPVLFCASDAKAHSTEAHNIWATQACVPTDPSPQEVFLPNVIESFNMWKNNMVDQMHEDIISLWDQSLKPCVKLTPLCVTLQCSKANFSQAKNLTNQTSSPPLEMKNCSFNVTTELRDKKKQVYSLFYVEDVVNLGNENNTYRIINCNTTAITQACPKTSFEPIPIHYCAPAGFAILKCNDKDFSGKGKCTNVSTVHCTHGIKPVVTTQLLINGSLAEGNITVRVENKSKNTDVWIVQLVEAVSLNCHRPGNNTRGEVQIGPGMTFYNIENVVGDTRSAYCKINGTTWNRTVEEVKKALATSSNRTAANITLNRASGGDPEVTHHMFNCGGEFFYCNTSQIFTDNITNGIIILPCRIRQIVSSWMRVGRGIYAPPIRGNITCNSNITGLLLTSDTPVTNNSGNLTFRPTGGNMKDIWRSELYKYKVVRIEPLSVAPTKARRHTVARQKDRQKRAAFGLGALFLGFLGAAGSTMGAAAVTLTVQARQLLSGIVQQQNNLLKAIEAQQHLLQLSIWGVKQLQARLLAVERYLQDQQILGLWGCSGKAVCYTTVPWNNSWPGSNSTDDIWGNLTWQQWDKLVSNYTGKIFGLLEEAQSQQEKNERDLLELDQWASLWNWFDITKWLWYIKIFLMAVGGIIGLRIIMTVFSVVRRVRQGYSPLSLQTLIPVQREQGRLGEIDEGGGEQDRSRSVRLVEGCLPLIWDDLRNLGIWSYQSLTSLACNVWRQLKTLGHLILHSLRLLRERLCLLGGIIQYWGKELKISAISLLDATAIAVAEGTDRIIEAFQVTLRIIRNIPRRIRQGLERALL</sequence>
<keyword id="KW-0014">AIDS</keyword>
<keyword id="KW-0053">Apoptosis</keyword>
<keyword id="KW-1165">Clathrin-mediated endocytosis of virus by host</keyword>
<keyword id="KW-0165">Cleavage on pair of basic residues</keyword>
<keyword id="KW-0175">Coiled coil</keyword>
<keyword id="KW-1015">Disulfide bond</keyword>
<keyword id="KW-1170">Fusion of virus membrane with host endosomal membrane</keyword>
<keyword id="KW-1168">Fusion of virus membrane with host membrane</keyword>
<keyword id="KW-0325">Glycoprotein</keyword>
<keyword id="KW-1032">Host cell membrane</keyword>
<keyword id="KW-1039">Host endosome</keyword>
<keyword id="KW-1043">Host membrane</keyword>
<keyword id="KW-0945">Host-virus interaction</keyword>
<keyword id="KW-0449">Lipoprotein</keyword>
<keyword id="KW-0472">Membrane</keyword>
<keyword id="KW-0564">Palmitate</keyword>
<keyword id="KW-1185">Reference proteome</keyword>
<keyword id="KW-0732">Signal</keyword>
<keyword id="KW-0812">Transmembrane</keyword>
<keyword id="KW-1133">Transmembrane helix</keyword>
<keyword id="KW-1161">Viral attachment to host cell</keyword>
<keyword id="KW-0261">Viral envelope protein</keyword>
<keyword id="KW-0899">Viral immunoevasion</keyword>
<keyword id="KW-1162">Viral penetration into host cytoplasm</keyword>
<keyword id="KW-0946">Virion</keyword>
<keyword id="KW-1164">Virus endocytosis by host</keyword>
<keyword id="KW-1160">Virus entry into host cell</keyword>
<organismHost>
    <name type="scientific">Pan</name>
    <name type="common">chimpanzees</name>
    <dbReference type="NCBI Taxonomy" id="9596"/>
</organismHost>
<evidence type="ECO:0000255" key="1">
    <source>
        <dbReference type="HAMAP-Rule" id="MF_04083"/>
    </source>
</evidence>
<gene>
    <name evidence="1" type="primary">env</name>
</gene>
<feature type="signal peptide" evidence="1">
    <location>
        <begin position="1"/>
        <end position="31"/>
    </location>
</feature>
<feature type="chain" id="PRO_0000441727" description="Envelope glycoprotein gp160" evidence="1">
    <location>
        <begin position="32"/>
        <end position="854"/>
    </location>
</feature>
<feature type="chain" id="PRO_0000441728" description="Surface protein gp120" evidence="1">
    <location>
        <begin position="32"/>
        <end position="500"/>
    </location>
</feature>
<feature type="chain" id="PRO_0000038474" description="Transmembrane protein gp41" evidence="1">
    <location>
        <begin position="501"/>
        <end position="854"/>
    </location>
</feature>
<feature type="topological domain" description="Extracellular" evidence="1">
    <location>
        <begin position="32"/>
        <end position="675"/>
    </location>
</feature>
<feature type="transmembrane region" description="Helical" evidence="1">
    <location>
        <begin position="676"/>
        <end position="696"/>
    </location>
</feature>
<feature type="topological domain" description="Cytoplasmic" evidence="1">
    <location>
        <begin position="697"/>
        <end position="854"/>
    </location>
</feature>
<feature type="region of interest" description="V1" evidence="1">
    <location>
        <begin position="130"/>
        <end position="154"/>
    </location>
</feature>
<feature type="region of interest" description="V2" evidence="1">
    <location>
        <begin position="155"/>
        <end position="194"/>
    </location>
</feature>
<feature type="region of interest" description="V3" evidence="1">
    <location>
        <begin position="294"/>
        <end position="327"/>
    </location>
</feature>
<feature type="region of interest" description="CD4-binding loop" evidence="1">
    <location>
        <begin position="362"/>
        <end position="372"/>
    </location>
</feature>
<feature type="region of interest" description="V4" evidence="1">
    <location>
        <begin position="383"/>
        <end position="402"/>
    </location>
</feature>
<feature type="region of interest" description="V5">
    <location>
        <begin position="445"/>
        <end position="456"/>
    </location>
</feature>
<feature type="region of interest" description="V5" evidence="1">
    <location>
        <begin position="447"/>
        <end position="456"/>
    </location>
</feature>
<feature type="region of interest" description="Fusion peptide" evidence="1">
    <location>
        <begin position="501"/>
        <end position="522"/>
    </location>
</feature>
<feature type="region of interest" description="Immunosuppression" evidence="1">
    <location>
        <begin position="564"/>
        <end position="582"/>
    </location>
</feature>
<feature type="region of interest" description="MPER; binding to GalCer" evidence="1">
    <location>
        <begin position="653"/>
        <end position="674"/>
    </location>
</feature>
<feature type="coiled-coil region" evidence="1">
    <location>
        <begin position="624"/>
        <end position="658"/>
    </location>
</feature>
<feature type="short sequence motif" description="YXXL motif; contains endocytosis signal" evidence="1">
    <location>
        <begin position="703"/>
        <end position="706"/>
    </location>
</feature>
<feature type="short sequence motif" description="Di-leucine internalization motif" evidence="1">
    <location>
        <begin position="853"/>
        <end position="854"/>
    </location>
</feature>
<feature type="site" description="Cleavage; by host furin" evidence="1">
    <location>
        <begin position="500"/>
        <end position="501"/>
    </location>
</feature>
<feature type="glycosylation site" description="N-linked (GlcNAc...) asparagine; by host" evidence="1">
    <location>
        <position position="134"/>
    </location>
</feature>
<feature type="glycosylation site" description="N-linked (GlcNAc...) asparagine; by host" evidence="1">
    <location>
        <position position="140"/>
    </location>
</feature>
<feature type="glycosylation site" description="N-linked (GlcNAc...) asparagine; by host" evidence="1">
    <location>
        <position position="143"/>
    </location>
</feature>
<feature type="glycosylation site" description="N-linked (GlcNAc...) asparagine; by host" evidence="1">
    <location>
        <position position="154"/>
    </location>
</feature>
<feature type="glycosylation site" description="N-linked (GlcNAc...) asparagine; by host" evidence="1">
    <location>
        <position position="158"/>
    </location>
</feature>
<feature type="glycosylation site" description="N-linked (GlcNAc...) asparagine; by host" evidence="1">
    <location>
        <position position="186"/>
    </location>
</feature>
<feature type="glycosylation site" description="N-linked (GlcNAc...) asparagine; by host" evidence="1">
    <location>
        <position position="195"/>
    </location>
</feature>
<feature type="glycosylation site" description="N-linked (GlcNAc...) asparagine; by host" evidence="1">
    <location>
        <position position="239"/>
    </location>
</feature>
<feature type="glycosylation site" description="N-linked (GlcNAc...) asparagine; by host" evidence="1">
    <location>
        <position position="260"/>
    </location>
</feature>
<feature type="glycosylation site" description="N-linked (GlcNAc...) asparagine; by host" evidence="1">
    <location>
        <position position="267"/>
    </location>
</feature>
<feature type="glycosylation site" description="N-linked (GlcNAc...) asparagine; by host" evidence="1">
    <location>
        <position position="274"/>
    </location>
</feature>
<feature type="glycosylation site" description="N-linked (GlcNAc...) asparagine; by host" evidence="1">
    <location>
        <position position="299"/>
    </location>
</feature>
<feature type="glycosylation site" description="N-linked (GlcNAc...) asparagine; by host" evidence="1">
    <location>
        <position position="331"/>
    </location>
</feature>
<feature type="glycosylation site" description="N-linked (GlcNAc...) asparagine; by host" evidence="1">
    <location>
        <position position="336"/>
    </location>
</feature>
<feature type="glycosylation site" description="N-linked (GlcNAc...) asparagine; by host" evidence="1">
    <location>
        <position position="351"/>
    </location>
</feature>
<feature type="glycosylation site" description="N-linked (GlcNAc...) asparagine; by host" evidence="1">
    <location>
        <position position="356"/>
    </location>
</feature>
<feature type="glycosylation site" description="N-linked (GlcNAc...) asparagine; by host" evidence="1">
    <location>
        <position position="384"/>
    </location>
</feature>
<feature type="glycosylation site" description="N-linked (GlcNAc...) asparagine; by host" evidence="1">
    <location>
        <position position="392"/>
    </location>
</feature>
<feature type="glycosylation site" description="N-linked (GlcNAc...) asparagine; by host" evidence="1">
    <location>
        <position position="426"/>
    </location>
</feature>
<feature type="glycosylation site" description="N-linked (GlcNAc...) asparagine; by host" evidence="1">
    <location>
        <position position="432"/>
    </location>
</feature>
<feature type="glycosylation site" description="N-linked (GlcNAc...) asparagine; by host" evidence="1">
    <location>
        <position position="446"/>
    </location>
</feature>
<feature type="glycosylation site" description="N-linked (GlcNAc...) asparagine; by host" evidence="1">
    <location>
        <position position="450"/>
    </location>
</feature>
<feature type="glycosylation site" description="N-linked (GlcNAc...) asparagine; by host" evidence="1">
    <location>
        <position position="601"/>
    </location>
</feature>
<feature type="glycosylation site" description="N-linked (GlcNAc...) asparagine; by host" evidence="1">
    <location>
        <position position="608"/>
    </location>
</feature>
<feature type="glycosylation site" description="N-linked (GlcNAc...) asparagine; by host" evidence="1">
    <location>
        <position position="616"/>
    </location>
</feature>
<feature type="glycosylation site" description="N-linked (GlcNAc...) asparagine; by host" evidence="1">
    <location>
        <position position="628"/>
    </location>
</feature>
<feature type="disulfide bond" evidence="1">
    <location>
        <begin position="53"/>
        <end position="73"/>
    </location>
</feature>
<feature type="disulfide bond" evidence="1">
    <location>
        <begin position="118"/>
        <end position="203"/>
    </location>
</feature>
<feature type="disulfide bond" evidence="1">
    <location>
        <begin position="125"/>
        <end position="194"/>
    </location>
</feature>
<feature type="disulfide bond" evidence="1">
    <location>
        <begin position="130"/>
        <end position="155"/>
    </location>
</feature>
<feature type="disulfide bond" evidence="1">
    <location>
        <begin position="216"/>
        <end position="245"/>
    </location>
</feature>
<feature type="disulfide bond" evidence="1">
    <location>
        <begin position="226"/>
        <end position="237"/>
    </location>
</feature>
<feature type="disulfide bond" evidence="1">
    <location>
        <begin position="294"/>
        <end position="328"/>
    </location>
</feature>
<feature type="disulfide bond" evidence="1">
    <location>
        <begin position="376"/>
        <end position="429"/>
    </location>
</feature>
<feature type="disulfide bond" evidence="1">
    <location>
        <begin position="383"/>
        <end position="402"/>
    </location>
</feature>
<feature type="disulfide bond" evidence="1">
    <location>
        <begin position="588"/>
        <end position="594"/>
    </location>
</feature>
<dbReference type="EMBL" id="X52154">
    <property type="protein sequence ID" value="CAA36407.1"/>
    <property type="molecule type" value="Genomic_RNA"/>
</dbReference>
<dbReference type="PIR" id="S09990">
    <property type="entry name" value="VCLJSI"/>
</dbReference>
<dbReference type="SMR" id="P17281"/>
<dbReference type="GlyCosmos" id="P17281">
    <property type="glycosylation" value="26 sites, No reported glycans"/>
</dbReference>
<dbReference type="Proteomes" id="UP000009153">
    <property type="component" value="Segment"/>
</dbReference>
<dbReference type="GO" id="GO:0044175">
    <property type="term" value="C:host cell endosome membrane"/>
    <property type="evidence" value="ECO:0007669"/>
    <property type="project" value="UniProtKB-SubCell"/>
</dbReference>
<dbReference type="GO" id="GO:0020002">
    <property type="term" value="C:host cell plasma membrane"/>
    <property type="evidence" value="ECO:0007669"/>
    <property type="project" value="UniProtKB-SubCell"/>
</dbReference>
<dbReference type="GO" id="GO:0016020">
    <property type="term" value="C:membrane"/>
    <property type="evidence" value="ECO:0007669"/>
    <property type="project" value="UniProtKB-UniRule"/>
</dbReference>
<dbReference type="GO" id="GO:0019031">
    <property type="term" value="C:viral envelope"/>
    <property type="evidence" value="ECO:0007669"/>
    <property type="project" value="UniProtKB-KW"/>
</dbReference>
<dbReference type="GO" id="GO:0055036">
    <property type="term" value="C:virion membrane"/>
    <property type="evidence" value="ECO:0007669"/>
    <property type="project" value="UniProtKB-SubCell"/>
</dbReference>
<dbReference type="GO" id="GO:0005198">
    <property type="term" value="F:structural molecule activity"/>
    <property type="evidence" value="ECO:0007669"/>
    <property type="project" value="UniProtKB-UniRule"/>
</dbReference>
<dbReference type="GO" id="GO:0075512">
    <property type="term" value="P:clathrin-dependent endocytosis of virus by host cell"/>
    <property type="evidence" value="ECO:0007669"/>
    <property type="project" value="UniProtKB-UniRule"/>
</dbReference>
<dbReference type="GO" id="GO:0039654">
    <property type="term" value="P:fusion of virus membrane with host endosome membrane"/>
    <property type="evidence" value="ECO:0007669"/>
    <property type="project" value="UniProtKB-UniRule"/>
</dbReference>
<dbReference type="GO" id="GO:0019064">
    <property type="term" value="P:fusion of virus membrane with host plasma membrane"/>
    <property type="evidence" value="ECO:0007669"/>
    <property type="project" value="UniProtKB-UniRule"/>
</dbReference>
<dbReference type="GO" id="GO:1903908">
    <property type="term" value="P:positive regulation of plasma membrane raft polarization"/>
    <property type="evidence" value="ECO:0007669"/>
    <property type="project" value="UniProtKB-UniRule"/>
</dbReference>
<dbReference type="GO" id="GO:1903911">
    <property type="term" value="P:positive regulation of receptor clustering"/>
    <property type="evidence" value="ECO:0007669"/>
    <property type="project" value="UniProtKB-UniRule"/>
</dbReference>
<dbReference type="GO" id="GO:0019082">
    <property type="term" value="P:viral protein processing"/>
    <property type="evidence" value="ECO:0007669"/>
    <property type="project" value="UniProtKB-UniRule"/>
</dbReference>
<dbReference type="GO" id="GO:0019062">
    <property type="term" value="P:virion attachment to host cell"/>
    <property type="evidence" value="ECO:0007669"/>
    <property type="project" value="UniProtKB-UniRule"/>
</dbReference>
<dbReference type="CDD" id="cd09909">
    <property type="entry name" value="HIV-1-like_HR1-HR2"/>
    <property type="match status" value="1"/>
</dbReference>
<dbReference type="FunFam" id="1.10.287.210:FF:000001">
    <property type="entry name" value="Envelope glycoprotein gp160"/>
    <property type="match status" value="1"/>
</dbReference>
<dbReference type="FunFam" id="1.20.5.490:FF:000001">
    <property type="entry name" value="Envelope glycoprotein gp160"/>
    <property type="match status" value="1"/>
</dbReference>
<dbReference type="FunFam" id="2.170.40.20:FF:000004">
    <property type="entry name" value="Envelope glycoprotein gp160"/>
    <property type="match status" value="1"/>
</dbReference>
<dbReference type="Gene3D" id="1.10.287.210">
    <property type="match status" value="1"/>
</dbReference>
<dbReference type="Gene3D" id="2.170.40.20">
    <property type="entry name" value="Human immunodeficiency virus 1, Gp160, envelope glycoprotein"/>
    <property type="match status" value="2"/>
</dbReference>
<dbReference type="Gene3D" id="1.20.5.490">
    <property type="entry name" value="Single helix bin"/>
    <property type="match status" value="1"/>
</dbReference>
<dbReference type="HAMAP" id="MF_04083">
    <property type="entry name" value="HIV_ENV"/>
    <property type="match status" value="1"/>
</dbReference>
<dbReference type="InterPro" id="IPR036377">
    <property type="entry name" value="Gp120_core_sf"/>
</dbReference>
<dbReference type="InterPro" id="IPR037527">
    <property type="entry name" value="Gp160"/>
</dbReference>
<dbReference type="InterPro" id="IPR000328">
    <property type="entry name" value="GP41-like"/>
</dbReference>
<dbReference type="InterPro" id="IPR000777">
    <property type="entry name" value="HIV1_Gp120"/>
</dbReference>
<dbReference type="Pfam" id="PF00516">
    <property type="entry name" value="GP120"/>
    <property type="match status" value="2"/>
</dbReference>
<dbReference type="Pfam" id="PF00517">
    <property type="entry name" value="GP41"/>
    <property type="match status" value="1"/>
</dbReference>
<dbReference type="SUPFAM" id="SSF56502">
    <property type="entry name" value="gp120 core"/>
    <property type="match status" value="2"/>
</dbReference>
<dbReference type="SUPFAM" id="SSF58069">
    <property type="entry name" value="Virus ectodomain"/>
    <property type="match status" value="1"/>
</dbReference>
<organism>
    <name type="scientific">Simian immunodeficiency virus (isolate CPZ GAB1)</name>
    <name type="common">SIV-cpz</name>
    <name type="synonym">Chimpanzee immunodeficiency virus</name>
    <dbReference type="NCBI Taxonomy" id="402771"/>
    <lineage>
        <taxon>Viruses</taxon>
        <taxon>Riboviria</taxon>
        <taxon>Pararnavirae</taxon>
        <taxon>Artverviricota</taxon>
        <taxon>Revtraviricetes</taxon>
        <taxon>Ortervirales</taxon>
        <taxon>Retroviridae</taxon>
        <taxon>Orthoretrovirinae</taxon>
        <taxon>Lentivirus</taxon>
        <taxon>Simian immunodeficiency virus</taxon>
    </lineage>
</organism>
<accession>P17281</accession>
<name>ENV_SIVCZ</name>
<proteinExistence type="inferred from homology"/>
<reference key="1">
    <citation type="journal article" date="1990" name="Nature">
        <title>Genetic organization of a chimpanzee lentivirus related to HIV-1.</title>
        <authorList>
            <person name="Huet T."/>
            <person name="Cheynier R."/>
            <person name="Meyerhans A."/>
            <person name="Roelants G."/>
            <person name="Wain-Hobson S."/>
        </authorList>
    </citation>
    <scope>NUCLEOTIDE SEQUENCE [GENOMIC RNA]</scope>
</reference>
<protein>
    <recommendedName>
        <fullName evidence="1">Envelope glycoprotein gp160</fullName>
    </recommendedName>
    <alternativeName>
        <fullName evidence="1">Env polyprotein</fullName>
    </alternativeName>
    <component>
        <recommendedName>
            <fullName evidence="1">Surface protein gp120</fullName>
            <shortName evidence="1">SU</shortName>
        </recommendedName>
        <alternativeName>
            <fullName evidence="1">Glycoprotein 120</fullName>
            <shortName evidence="1">gp120</shortName>
        </alternativeName>
    </component>
    <component>
        <recommendedName>
            <fullName evidence="1">Transmembrane protein gp41</fullName>
            <shortName evidence="1">TM</shortName>
        </recommendedName>
        <alternativeName>
            <fullName evidence="1">Glycoprotein 41</fullName>
            <shortName evidence="1">gp41</shortName>
        </alternativeName>
    </component>
</protein>
<comment type="function">
    <molecule>Surface protein gp120</molecule>
    <text evidence="1">Attaches the virus to the host lymphoid cell by binding to the primary receptor CD4. This interaction induces a structural rearrangement creating a high affinity binding site for a chemokine coreceptor like CXCR4 and/or CCR5. Acts as a ligand for CD209/DC-SIGN and CLEC4M/DC-SIGNR, which are respectively found on dendritic cells (DCs), and on endothelial cells of liver sinusoids and lymph node sinuses. These interactions allow capture of viral particles at mucosal surfaces by these cells and subsequent transmission to permissive cells. HIV subverts the migration properties of dendritic cells to gain access to CD4+ T-cells in lymph nodes. Virus transmission to permissive T-cells occurs either in trans (without DCs infection, through viral capture and transmission), or in cis (following DCs productive infection, through the usual CD4-gp120 interaction), thereby inducing a robust infection. In trans infection, bound virions remain infectious over days and it is proposed that they are not degraded, but protected in non-lysosomal acidic organelles within the DCs close to the cell membrane thus contributing to the viral infectious potential during DCs' migration from the periphery to the lymphoid tissues. On arrival at lymphoid tissues, intact virions recycle back to DCs' cell surface allowing virus transmission to CD4+ T-cells.</text>
</comment>
<comment type="function">
    <molecule>Transmembrane protein gp41</molecule>
    <text evidence="1">Acts as a class I viral fusion protein. Under the current model, the protein has at least 3 conformational states: pre-fusion native state, pre-hairpin intermediate state, and post-fusion hairpin state. During fusion of viral and target intracellular membranes, the coiled coil regions (heptad repeats) assume a trimer-of-hairpins structure, positioning the fusion peptide in close proximity to the C-terminal region of the ectodomain. The formation of this structure appears to drive apposition and subsequent fusion of viral and target cell membranes. Complete fusion occurs in host cell endosomes and is dynamin-dependent, however some lipid transfer might occur at the plasma membrane. The virus undergoes clathrin-dependent internalization long before endosomal fusion, thus minimizing the surface exposure of conserved viral epitopes during fusion and reducing the efficacy of inhibitors targeting these epitopes. Membranes fusion leads to delivery of the nucleocapsid into the cytoplasm.</text>
</comment>
<comment type="function">
    <molecule>Envelope glycoprotein gp160</molecule>
    <text evidence="1">Oligomerizes in the host endoplasmic reticulum into predominantly trimers. In a second time, gp160 transits in the host Golgi, where glycosylation is completed. The precursor is then proteolytically cleaved in the trans-Golgi and thereby activated by cellular furin or furin-like proteases to produce gp120 and gp41.</text>
</comment>
<comment type="subunit">
    <molecule>Surface protein gp120</molecule>
    <text evidence="1">The mature envelope protein (Env) consists of a homotrimer of non-covalently associated gp120-gp41 heterodimers. The resulting complex protrudes from the virus surface as a spike. There seems to be as few as 10 spikes on the average virion. Interacts with host CD4, CCR5 and CXCR4. Gp120 also interacts with the C-type lectins CD209/DC-SIGN and CLEC4M/DC-SIGNR (collectively referred to as DC-SIGN(R)). Gp120 and gp41 interact with GalCer. Gp120 interacts with host ITGA4/ITGB7 complex; on CD4+ T-cells, this interaction results in rapid activation of integrin ITGAL/LFA-1, which facilitates efficient cell-to-cell spreading of HIV-1. Gp120 interacts with cell-associated heparan sulfate; this interaction increases virus infectivity on permissive cells and may be involved in infection of CD4- cells.</text>
</comment>
<comment type="subunit">
    <molecule>Transmembrane protein gp41</molecule>
    <text evidence="1">The mature envelope protein (Env) consists of a homotrimer of non-covalently associated gp120-gp41 heterodimers. The resulting complex protrudes from the virus surface as a spike. There seems to be as few as 10 spikes on the average virion.</text>
</comment>
<comment type="subcellular location">
    <molecule>Surface protein gp120</molecule>
    <subcellularLocation>
        <location evidence="1">Virion membrane</location>
        <topology evidence="1">Peripheral membrane protein</topology>
    </subcellularLocation>
    <subcellularLocation>
        <location evidence="1">Host cell membrane</location>
        <topology evidence="1">Peripheral membrane protein</topology>
    </subcellularLocation>
    <subcellularLocation>
        <location evidence="1">Host endosome membrane</location>
        <topology evidence="1">Single-pass type I membrane protein</topology>
    </subcellularLocation>
    <text evidence="1">The surface protein is not anchored to the viral envelope, but associates with the extravirion surface through its binding to TM. It is probably concentrated at the site of budding and incorporated into the virions possibly by contacts between the cytoplasmic tail of Env and the N-terminus of Gag.</text>
</comment>
<comment type="subcellular location">
    <molecule>Transmembrane protein gp41</molecule>
    <subcellularLocation>
        <location evidence="1">Virion membrane</location>
        <topology evidence="1">Single-pass type I membrane protein</topology>
    </subcellularLocation>
    <subcellularLocation>
        <location evidence="1">Host cell membrane</location>
        <topology evidence="1">Single-pass type I membrane protein</topology>
    </subcellularLocation>
    <subcellularLocation>
        <location evidence="1">Host endosome membrane</location>
        <topology evidence="1">Single-pass type I membrane protein</topology>
    </subcellularLocation>
    <text evidence="1">It is probably concentrated at the site of budding and incorporated into the virions possibly by contacts between the cytoplasmic tail of Env and the N-terminus of Gag.</text>
</comment>
<comment type="domain">
    <text evidence="1">Some of the most genetically diverse regions of the viral genome are present in Env. They are called variable regions 1 through 5 (V1 through V5). Coreceptor usage of gp120 is determined mainly by the primary structure of the third variable region (V3) in the outer domain of gp120. The sequence of V3 determines which coreceptor, CCR5 and/or CXCR4 (corresponding to R5/macrophage, X4/T cell and R5X4/T cell and macrophage tropism), is used to trigger the fusion potential of the Env complex, and hence which cells the virus can infect. Binding to CCR5 involves a region adjacent in addition to V3.</text>
</comment>
<comment type="domain">
    <text evidence="1">The membrane proximal external region (MPER) present in gp41 is a tryptophan-rich region recognized by the antibodies 2F5, Z13, and 4E10. MPER seems to play a role in fusion.</text>
</comment>
<comment type="domain">
    <text evidence="1">The 17 amino acids long immunosuppressive region is present in many retroviral envelope proteins. Synthetic peptides derived from this relatively conserved sequence inhibit immune function in vitro and in vivo.</text>
</comment>
<comment type="domain">
    <text evidence="1">The YXXL motif is involved in determining the exact site of viral release at the surface of infected mononuclear cells and promotes endocytosis. YXXL and di-leucine endocytosis motifs interact directly or indirectly with the clathrin adapter complexes, opperate independently, and their activities are not additive.</text>
</comment>
<comment type="domain">
    <text evidence="1">The CD4-binding region is targeted by the antibody b12.</text>
</comment>
<comment type="PTM">
    <text evidence="1">Highly glycosylated by host. The high number of glycan on the protein is reffered to as 'glycan shield' because it contributes to hide protein sequence from adaptive immune system.</text>
</comment>
<comment type="PTM">
    <text evidence="1">Palmitoylation of the transmembrane protein and of Env polyprotein (prior to its proteolytic cleavage) is essential for their association with host cell membrane lipid rafts. Palmitoylation is therefore required for envelope trafficking to classical lipid rafts, but not for viral replication.</text>
</comment>
<comment type="PTM">
    <text evidence="1">Specific enzymatic cleavages in vivo yield mature proteins. Envelope glycoproteins are synthesized as an inactive precursor that is heavily N-glycosylated and processed likely by host cell furin in the Golgi to yield the mature SU and TM proteins. The cleavage site between SU and TM requires the minimal sequence [KR]-X-[KR]-R. About 2 of the 9 disulfide bonds of gp41 are reduced by P4HB/PDI, following binding to CD4 receptor.</text>
</comment>
<comment type="miscellaneous">
    <text evidence="1">Inhibitors targeting HIV-1 viral envelope proteins are used as antiretroviral drugs. Attachment of virions to the cell surface via non-specific interactions and CD4 binding can be blocked by inhibitors that include cyanovirin-N, cyclotriazadisulfonamide analogs, PRO 2000, TNX 355 and PRO 542. In addition, BMS 806 can block CD4-induced conformational changes. Env interactions with the coreceptor molecules can be targeted by CCR5 antagonists including SCH-D, maraviroc (UK 427857) and aplaviroc (GW 873140), and the CXCR4 antagonist AMD 070. Fusion of viral and cellular membranes can be inhibited by peptides such as enfuvirtide and tifuvirtide (T 1249). Resistance to inhibitors associated with mutations in Env are observed. Most of the time, single mutations confer only a modest reduction in drug susceptibility. Combination of several mutations is usually required to develop a high-level drug resistance.</text>
</comment>
<comment type="miscellaneous">
    <text evidence="1">HIV-1 lineages are divided in three main groups, M (for Major), O (for Outlier), and N (for New, or Non-M, Non-O). The vast majority of strains found worldwide belong to the group M. Group O seems to be endemic to and largely confined to Cameroon and neighboring countries in West Central Africa, where these viruses represent a small minority of HIV-1 strains. The group N is represented by a limited number of isolates from Cameroonian persons. The group M is further subdivided in 9 clades or subtypes (A to D, F to H, J and K).</text>
</comment>
<comment type="similarity">
    <text evidence="1">Belongs to the HIV-1 env protein family.</text>
</comment>